<organism>
    <name type="scientific">Homo sapiens</name>
    <name type="common">Human</name>
    <dbReference type="NCBI Taxonomy" id="9606"/>
    <lineage>
        <taxon>Eukaryota</taxon>
        <taxon>Metazoa</taxon>
        <taxon>Chordata</taxon>
        <taxon>Craniata</taxon>
        <taxon>Vertebrata</taxon>
        <taxon>Euteleostomi</taxon>
        <taxon>Mammalia</taxon>
        <taxon>Eutheria</taxon>
        <taxon>Euarchontoglires</taxon>
        <taxon>Primates</taxon>
        <taxon>Haplorrhini</taxon>
        <taxon>Catarrhini</taxon>
        <taxon>Hominidae</taxon>
        <taxon>Homo</taxon>
    </lineage>
</organism>
<comment type="function">
    <text>May be involved in spermatogenesis.</text>
</comment>
<comment type="subunit">
    <text evidence="6">Associates with the nuclear pore complex (NPC).</text>
</comment>
<comment type="subcellular location">
    <subcellularLocation>
        <location evidence="6">Nucleus</location>
        <location evidence="6">Nucleoplasm</location>
    </subcellularLocation>
    <subcellularLocation>
        <location evidence="6">Nucleus inner membrane</location>
    </subcellularLocation>
    <text>Colocalizes with the NPC and nuclear lamins at the nuclear periphery.</text>
</comment>
<comment type="tissue specificity">
    <text evidence="2 4 5">Testis-specific in adults. In fetal brain expressed only from the paternal allele.</text>
</comment>
<feature type="chain" id="PRO_0000243929" description="Nuclear pore-associated protein 1">
    <location>
        <begin position="1"/>
        <end position="1156"/>
    </location>
</feature>
<feature type="region of interest" description="Disordered" evidence="1">
    <location>
        <begin position="1"/>
        <end position="60"/>
    </location>
</feature>
<feature type="region of interest" description="Disordered" evidence="1">
    <location>
        <begin position="155"/>
        <end position="204"/>
    </location>
</feature>
<feature type="region of interest" description="Disordered" evidence="1">
    <location>
        <begin position="219"/>
        <end position="266"/>
    </location>
</feature>
<feature type="region of interest" description="Disordered" evidence="1">
    <location>
        <begin position="481"/>
        <end position="515"/>
    </location>
</feature>
<feature type="region of interest" description="Disordered" evidence="1">
    <location>
        <begin position="680"/>
        <end position="703"/>
    </location>
</feature>
<feature type="region of interest" description="Disordered" evidence="1">
    <location>
        <begin position="732"/>
        <end position="786"/>
    </location>
</feature>
<feature type="region of interest" description="Disordered" evidence="1">
    <location>
        <begin position="872"/>
        <end position="915"/>
    </location>
</feature>
<feature type="region of interest" description="Disordered" evidence="1">
    <location>
        <begin position="1026"/>
        <end position="1046"/>
    </location>
</feature>
<feature type="compositionally biased region" description="Basic residues" evidence="1">
    <location>
        <begin position="50"/>
        <end position="59"/>
    </location>
</feature>
<feature type="compositionally biased region" description="Basic and acidic residues" evidence="1">
    <location>
        <begin position="156"/>
        <end position="165"/>
    </location>
</feature>
<feature type="compositionally biased region" description="Polar residues" evidence="1">
    <location>
        <begin position="179"/>
        <end position="197"/>
    </location>
</feature>
<feature type="compositionally biased region" description="Polar residues" evidence="1">
    <location>
        <begin position="219"/>
        <end position="231"/>
    </location>
</feature>
<feature type="compositionally biased region" description="Polar residues" evidence="1">
    <location>
        <begin position="680"/>
        <end position="692"/>
    </location>
</feature>
<feature type="compositionally biased region" description="Polar residues" evidence="1">
    <location>
        <begin position="732"/>
        <end position="750"/>
    </location>
</feature>
<feature type="compositionally biased region" description="Polar residues" evidence="1">
    <location>
        <begin position="884"/>
        <end position="915"/>
    </location>
</feature>
<feature type="compositionally biased region" description="Polar residues" evidence="1">
    <location>
        <begin position="1028"/>
        <end position="1046"/>
    </location>
</feature>
<feature type="sequence variant" id="VAR_050878" description="In dbSNP:rs35022251.">
    <original>P</original>
    <variation>Q</variation>
    <location>
        <position position="34"/>
    </location>
</feature>
<feature type="sequence variant" id="VAR_035682" description="In a colorectal cancer sample; somatic mutation; dbSNP:rs772577429." evidence="3">
    <original>R</original>
    <variation>Q</variation>
    <location>
        <position position="37"/>
    </location>
</feature>
<feature type="sequence variant" id="VAR_035683" description="In a colorectal cancer sample; somatic mutation; dbSNP:rs778802437." evidence="3">
    <original>V</original>
    <variation>I</variation>
    <location>
        <position position="114"/>
    </location>
</feature>
<feature type="sequence variant" id="VAR_050879" description="In dbSNP:rs35870568.">
    <original>W</original>
    <variation>R</variation>
    <location>
        <position position="152"/>
    </location>
</feature>
<feature type="sequence variant" id="VAR_026872" description="In dbSNP:rs3784246.">
    <original>V</original>
    <variation>A</variation>
    <location>
        <position position="212"/>
    </location>
</feature>
<feature type="sequence variant" id="VAR_026873" description="In dbSNP:rs1563102." evidence="2">
    <original>G</original>
    <variation>R</variation>
    <location>
        <position position="253"/>
    </location>
</feature>
<feature type="sequence variant" id="VAR_026874" description="In dbSNP:rs7165533.">
    <original>N</original>
    <variation>S</variation>
    <location>
        <position position="282"/>
    </location>
</feature>
<feature type="sequence variant" id="VAR_050880" description="In dbSNP:rs36025315.">
    <original>P</original>
    <variation>A</variation>
    <location>
        <position position="343"/>
    </location>
</feature>
<feature type="sequence variant" id="VAR_026875" description="In dbSNP:rs3742950.">
    <original>Q</original>
    <variation>E</variation>
    <location>
        <position position="406"/>
    </location>
</feature>
<feature type="sequence variant" id="VAR_050881" description="In dbSNP:rs36032407.">
    <original>A</original>
    <variation>T</variation>
    <location>
        <position position="757"/>
    </location>
</feature>
<feature type="sequence variant" id="VAR_050882" description="In dbSNP:rs34413216.">
    <original>T</original>
    <variation>P</variation>
    <location>
        <position position="929"/>
    </location>
</feature>
<name>NPAP1_HUMAN</name>
<dbReference type="EMBL" id="AF179681">
    <property type="protein sequence ID" value="AAF72107.1"/>
    <property type="molecule type" value="Genomic_DNA"/>
</dbReference>
<dbReference type="EMBL" id="AC100720">
    <property type="status" value="NOT_ANNOTATED_CDS"/>
    <property type="molecule type" value="Genomic_DNA"/>
</dbReference>
<dbReference type="CCDS" id="CCDS10015.1"/>
<dbReference type="RefSeq" id="NP_061831.2">
    <property type="nucleotide sequence ID" value="NM_018958.3"/>
</dbReference>
<dbReference type="BioGRID" id="117244">
    <property type="interactions" value="11"/>
</dbReference>
<dbReference type="FunCoup" id="Q9NZP6">
    <property type="interactions" value="3"/>
</dbReference>
<dbReference type="IntAct" id="Q9NZP6">
    <property type="interactions" value="9"/>
</dbReference>
<dbReference type="STRING" id="9606.ENSP00000333735"/>
<dbReference type="TCDB" id="1.I.1.1.3">
    <property type="family name" value="the nuclear pore complex (npc) family"/>
</dbReference>
<dbReference type="GlyGen" id="Q9NZP6">
    <property type="glycosylation" value="5 sites"/>
</dbReference>
<dbReference type="iPTMnet" id="Q9NZP6"/>
<dbReference type="PhosphoSitePlus" id="Q9NZP6"/>
<dbReference type="BioMuta" id="NPAP1"/>
<dbReference type="DMDM" id="147744554"/>
<dbReference type="MassIVE" id="Q9NZP6"/>
<dbReference type="PaxDb" id="9606-ENSP00000333735"/>
<dbReference type="PeptideAtlas" id="Q9NZP6"/>
<dbReference type="ProteomicsDB" id="83473"/>
<dbReference type="Antibodypedia" id="53468">
    <property type="antibodies" value="60 antibodies from 16 providers"/>
</dbReference>
<dbReference type="DNASU" id="23742"/>
<dbReference type="Ensembl" id="ENST00000329468.5">
    <property type="protein sequence ID" value="ENSP00000333735.3"/>
    <property type="gene ID" value="ENSG00000185823.5"/>
</dbReference>
<dbReference type="GeneID" id="23742"/>
<dbReference type="KEGG" id="hsa:23742"/>
<dbReference type="MANE-Select" id="ENST00000329468.5">
    <property type="protein sequence ID" value="ENSP00000333735.3"/>
    <property type="RefSeq nucleotide sequence ID" value="NM_018958.3"/>
    <property type="RefSeq protein sequence ID" value="NP_061831.2"/>
</dbReference>
<dbReference type="UCSC" id="uc001ywo.4">
    <property type="organism name" value="human"/>
</dbReference>
<dbReference type="AGR" id="HGNC:1190"/>
<dbReference type="CTD" id="23742"/>
<dbReference type="DisGeNET" id="23742"/>
<dbReference type="GeneCards" id="NPAP1"/>
<dbReference type="GeneReviews" id="NPAP1"/>
<dbReference type="HGNC" id="HGNC:1190">
    <property type="gene designation" value="NPAP1"/>
</dbReference>
<dbReference type="HPA" id="ENSG00000185823">
    <property type="expression patterns" value="Tissue enhanced (testis)"/>
</dbReference>
<dbReference type="MalaCards" id="NPAP1"/>
<dbReference type="MIM" id="610922">
    <property type="type" value="gene"/>
</dbReference>
<dbReference type="neXtProt" id="NX_Q9NZP6"/>
<dbReference type="OpenTargets" id="ENSG00000185823"/>
<dbReference type="PharmGKB" id="PA25519"/>
<dbReference type="VEuPathDB" id="HostDB:ENSG00000185823"/>
<dbReference type="eggNOG" id="ENOG502RU1K">
    <property type="taxonomic scope" value="Eukaryota"/>
</dbReference>
<dbReference type="GeneTree" id="ENSGT00940000153253"/>
<dbReference type="HOGENOM" id="CLU_300841_0_0_1"/>
<dbReference type="InParanoid" id="Q9NZP6"/>
<dbReference type="OMA" id="EKGGSCH"/>
<dbReference type="OrthoDB" id="9539601at2759"/>
<dbReference type="PAN-GO" id="Q9NZP6">
    <property type="GO annotations" value="5 GO annotations based on evolutionary models"/>
</dbReference>
<dbReference type="PhylomeDB" id="Q9NZP6"/>
<dbReference type="TreeFam" id="TF340538"/>
<dbReference type="PathwayCommons" id="Q9NZP6"/>
<dbReference type="SignaLink" id="Q9NZP6"/>
<dbReference type="BioGRID-ORCS" id="23742">
    <property type="hits" value="7 hits in 1143 CRISPR screens"/>
</dbReference>
<dbReference type="GenomeRNAi" id="23742"/>
<dbReference type="Pharos" id="Q9NZP6">
    <property type="development level" value="Tbio"/>
</dbReference>
<dbReference type="PRO" id="PR:Q9NZP6"/>
<dbReference type="Proteomes" id="UP000005640">
    <property type="component" value="Chromosome 15"/>
</dbReference>
<dbReference type="RNAct" id="Q9NZP6">
    <property type="molecule type" value="protein"/>
</dbReference>
<dbReference type="Bgee" id="ENSG00000185823">
    <property type="expression patterns" value="Expressed in male germ line stem cell (sensu Vertebrata) in testis and 27 other cell types or tissues"/>
</dbReference>
<dbReference type="GO" id="GO:0043231">
    <property type="term" value="C:intracellular membrane-bounded organelle"/>
    <property type="evidence" value="ECO:0000314"/>
    <property type="project" value="HPA"/>
</dbReference>
<dbReference type="GO" id="GO:0005637">
    <property type="term" value="C:nuclear inner membrane"/>
    <property type="evidence" value="ECO:0007669"/>
    <property type="project" value="UniProtKB-SubCell"/>
</dbReference>
<dbReference type="GO" id="GO:0005643">
    <property type="term" value="C:nuclear pore"/>
    <property type="evidence" value="ECO:0000318"/>
    <property type="project" value="GO_Central"/>
</dbReference>
<dbReference type="GO" id="GO:0005654">
    <property type="term" value="C:nucleoplasm"/>
    <property type="evidence" value="ECO:0000314"/>
    <property type="project" value="HPA"/>
</dbReference>
<dbReference type="GO" id="GO:0005886">
    <property type="term" value="C:plasma membrane"/>
    <property type="evidence" value="ECO:0000314"/>
    <property type="project" value="HPA"/>
</dbReference>
<dbReference type="GO" id="GO:0008139">
    <property type="term" value="F:nuclear localization sequence binding"/>
    <property type="evidence" value="ECO:0000318"/>
    <property type="project" value="GO_Central"/>
</dbReference>
<dbReference type="GO" id="GO:0017056">
    <property type="term" value="F:structural constituent of nuclear pore"/>
    <property type="evidence" value="ECO:0000318"/>
    <property type="project" value="GO_Central"/>
</dbReference>
<dbReference type="GO" id="GO:0030154">
    <property type="term" value="P:cell differentiation"/>
    <property type="evidence" value="ECO:0007669"/>
    <property type="project" value="UniProtKB-KW"/>
</dbReference>
<dbReference type="GO" id="GO:0006606">
    <property type="term" value="P:protein import into nucleus"/>
    <property type="evidence" value="ECO:0000318"/>
    <property type="project" value="GO_Central"/>
</dbReference>
<dbReference type="GO" id="GO:0006405">
    <property type="term" value="P:RNA export from nucleus"/>
    <property type="evidence" value="ECO:0000318"/>
    <property type="project" value="GO_Central"/>
</dbReference>
<dbReference type="GO" id="GO:0007283">
    <property type="term" value="P:spermatogenesis"/>
    <property type="evidence" value="ECO:0000303"/>
    <property type="project" value="UniProtKB"/>
</dbReference>
<dbReference type="InterPro" id="IPR026054">
    <property type="entry name" value="Nucleoporin"/>
</dbReference>
<dbReference type="PANTHER" id="PTHR23193">
    <property type="entry name" value="NUCLEAR PORE COMPLEX PROTEIN NUP"/>
    <property type="match status" value="1"/>
</dbReference>
<dbReference type="PANTHER" id="PTHR23193:SF15">
    <property type="entry name" value="NUCLEAR PORE-ASSOCIATED PROTEIN 1"/>
    <property type="match status" value="1"/>
</dbReference>
<dbReference type="Pfam" id="PF15229">
    <property type="entry name" value="POM121"/>
    <property type="match status" value="1"/>
</dbReference>
<proteinExistence type="evidence at protein level"/>
<evidence type="ECO:0000256" key="1">
    <source>
        <dbReference type="SAM" id="MobiDB-lite"/>
    </source>
</evidence>
<evidence type="ECO:0000269" key="2">
    <source>
    </source>
</evidence>
<evidence type="ECO:0000269" key="3">
    <source>
    </source>
</evidence>
<evidence type="ECO:0000269" key="4">
    <source>
    </source>
</evidence>
<evidence type="ECO:0000269" key="5">
    <source>
    </source>
</evidence>
<evidence type="ECO:0000269" key="6">
    <source>
    </source>
</evidence>
<keyword id="KW-0217">Developmental protein</keyword>
<keyword id="KW-0221">Differentiation</keyword>
<keyword id="KW-0472">Membrane</keyword>
<keyword id="KW-0539">Nucleus</keyword>
<keyword id="KW-1185">Reference proteome</keyword>
<keyword id="KW-0744">Spermatogenesis</keyword>
<gene>
    <name type="primary">NPAP1</name>
    <name type="synonym">C15orf2</name>
</gene>
<sequence length="1156" mass="120954">MGNLLSKFRPGCRRRPLPGPGRGAPAPLSRDASPPGRAHSVPTPRPFRGLFRRNARRRPSAASIFVAPKRPCPLPRAAAAPLGVLPAVGWGLAIRKTPMLPARNPPRFGHPSSVRIPPPSRMFTLLLPSPREPAVKARKPIPATLLEETEVWAQEGPRRVKKDEDPVQIEGEDDEKRTPLSSGEASSTSRSQGTQGDVASFRCSPGPLEGNVYHKFSENSMSEKAQASPASSCLEGPAMPSTHSQAGCARHLGKPDPDATAPPEPAVGCSLLQQKLAAEVLNEEPPPSSLGLPIPLMSGKRMPDEKPFCIPPRSAAPPRAARNRPCKRKMSIPLLLPLPPSLPLLWDRGELPPPAKLPCLSVEGDLHTLEKSPEYKRNSRILEDKTETMTNSSITQPAPSFSQPVQTTDSLPLTTYTSQVSAPLPIPDLADLATGPLILPIPPLSTTPKMDEKIAFTIPNSPLALPADLVPILGDQSNEKGGSYNSVVGAAPLTSDPPTPPSSTPSFKPPVTRESPISMCVDSPPPLSFLTLLPVPSTGTSVITSKPMNSTSVISTVTTNASAHLTSQTAVDPEVVNMDTTAPSQVVIFTSSLSSRVSSLPNSQIHCSAEQRHPGKTSVYTSPLPFIFHNTTPSFNQLFGKEATPQPKFEAPDGQPQKASLPSACVFLSLPIIPPPDTSTLVNSASTASSSKPPIETNAMHTTPPSKAVILQSASVSKKYLPFYLGLPGSGNTQPSGNTASVQGSTSLPAQSVRAPATASNHPLNPGATPQPKFGAPDGPQQKTSLPSAHDFLSLPIMVPPDTSTLVSSASAASLSKPAIDTSDMNTTPPSKTVILQSTFVSRKEEYIRFYMGLPGSGNTLHSDSIASAQVSTSFPAQADRRPTTTSSHPLNTGSISHSTLGATDGQQKSDSSFILGNPATPAPVIGLTSPSVQPLSGSIIPPGFAELTSPYTALGTPVNAEPVEGHNASAFPNGTAKTSGFRIATGMPGTGDSTLLVGNTIPGPQVIMGPGTPMDGGSIGFSMSAPGPSSTSGELNIGQGQSGTPSTTSVFPFGQAAWDPTGHSMAAAPQGASNIPVFGYTSAAAYIPGLDPPTQNSCSGMGGDGTRSIVGGPCVPAFQQCILQHTWTERKFYTSSTHYYGQETYVRRHVCFQLP</sequence>
<reference key="1">
    <citation type="journal article" date="2000" name="Genomics">
        <title>Identification of a testis-specific gene (c15orf2) in the Prader-Willi syndrome region on chromosome 15.</title>
        <authorList>
            <person name="Faerber C."/>
            <person name="Gross S."/>
            <person name="Neesen J."/>
            <person name="Buiting K."/>
            <person name="Horsthemke B."/>
        </authorList>
    </citation>
    <scope>NUCLEOTIDE SEQUENCE [GENOMIC DNA]</scope>
    <scope>POSSIBLE FUNCTION</scope>
    <scope>TISSUE SPECIFICITY</scope>
    <scope>VARIANT ARG-253</scope>
</reference>
<reference key="2">
    <citation type="journal article" date="2006" name="Nature">
        <title>Analysis of the DNA sequence and duplication history of human chromosome 15.</title>
        <authorList>
            <person name="Zody M.C."/>
            <person name="Garber M."/>
            <person name="Sharpe T."/>
            <person name="Young S.K."/>
            <person name="Rowen L."/>
            <person name="O'Neill K."/>
            <person name="Whittaker C.A."/>
            <person name="Kamal M."/>
            <person name="Chang J.L."/>
            <person name="Cuomo C.A."/>
            <person name="Dewar K."/>
            <person name="FitzGerald M.G."/>
            <person name="Kodira C.D."/>
            <person name="Madan A."/>
            <person name="Qin S."/>
            <person name="Yang X."/>
            <person name="Abbasi N."/>
            <person name="Abouelleil A."/>
            <person name="Arachchi H.M."/>
            <person name="Baradarani L."/>
            <person name="Birditt B."/>
            <person name="Bloom S."/>
            <person name="Bloom T."/>
            <person name="Borowsky M.L."/>
            <person name="Burke J."/>
            <person name="Butler J."/>
            <person name="Cook A."/>
            <person name="DeArellano K."/>
            <person name="DeCaprio D."/>
            <person name="Dorris L. III"/>
            <person name="Dors M."/>
            <person name="Eichler E.E."/>
            <person name="Engels R."/>
            <person name="Fahey J."/>
            <person name="Fleetwood P."/>
            <person name="Friedman C."/>
            <person name="Gearin G."/>
            <person name="Hall J.L."/>
            <person name="Hensley G."/>
            <person name="Johnson E."/>
            <person name="Jones C."/>
            <person name="Kamat A."/>
            <person name="Kaur A."/>
            <person name="Locke D.P."/>
            <person name="Madan A."/>
            <person name="Munson G."/>
            <person name="Jaffe D.B."/>
            <person name="Lui A."/>
            <person name="Macdonald P."/>
            <person name="Mauceli E."/>
            <person name="Naylor J.W."/>
            <person name="Nesbitt R."/>
            <person name="Nicol R."/>
            <person name="O'Leary S.B."/>
            <person name="Ratcliffe A."/>
            <person name="Rounsley S."/>
            <person name="She X."/>
            <person name="Sneddon K.M.B."/>
            <person name="Stewart S."/>
            <person name="Sougnez C."/>
            <person name="Stone S.M."/>
            <person name="Topham K."/>
            <person name="Vincent D."/>
            <person name="Wang S."/>
            <person name="Zimmer A.R."/>
            <person name="Birren B.W."/>
            <person name="Hood L."/>
            <person name="Lander E.S."/>
            <person name="Nusbaum C."/>
        </authorList>
    </citation>
    <scope>NUCLEOTIDE SEQUENCE [LARGE SCALE GENOMIC DNA]</scope>
</reference>
<reference key="3">
    <citation type="journal article" date="2006" name="Science">
        <title>The consensus coding sequences of human breast and colorectal cancers.</title>
        <authorList>
            <person name="Sjoeblom T."/>
            <person name="Jones S."/>
            <person name="Wood L.D."/>
            <person name="Parsons D.W."/>
            <person name="Lin J."/>
            <person name="Barber T.D."/>
            <person name="Mandelker D."/>
            <person name="Leary R.J."/>
            <person name="Ptak J."/>
            <person name="Silliman N."/>
            <person name="Szabo S."/>
            <person name="Buckhaults P."/>
            <person name="Farrell C."/>
            <person name="Meeh P."/>
            <person name="Markowitz S.D."/>
            <person name="Willis J."/>
            <person name="Dawson D."/>
            <person name="Willson J.K.V."/>
            <person name="Gazdar A.F."/>
            <person name="Hartigan J."/>
            <person name="Wu L."/>
            <person name="Liu C."/>
            <person name="Parmigiani G."/>
            <person name="Park B.H."/>
            <person name="Bachman K.E."/>
            <person name="Papadopoulos N."/>
            <person name="Vogelstein B."/>
            <person name="Kinzler K.W."/>
            <person name="Velculescu V.E."/>
        </authorList>
    </citation>
    <scope>VARIANTS [LARGE SCALE ANALYSIS] GLN-37 AND ILE-114</scope>
</reference>
<reference key="4">
    <citation type="journal article" date="2007" name="Genomics">
        <title>C15orf2 and a novel noncoding transcript from the Prader-Willi/Angelman syndrome region show monoallelic expression in fetal brain.</title>
        <authorList>
            <person name="Buiting K."/>
            <person name="Nazlican H."/>
            <person name="Galetzka D."/>
            <person name="Wawrzik M."/>
            <person name="Gross S."/>
            <person name="Horsthemke B."/>
        </authorList>
    </citation>
    <scope>TISSUE SPECIFICITY</scope>
</reference>
<reference key="5">
    <citation type="journal article" date="2010" name="Neurogenetics">
        <title>The C15orf2 gene in the Prader-Willi syndrome region is subject to genomic imprinting and positive selection.</title>
        <authorList>
            <person name="Wawrzik M."/>
            <person name="Unmehopa U.A."/>
            <person name="Swaab D.F."/>
            <person name="van de Nes J."/>
            <person name="Buiting K."/>
            <person name="Horsthemke B."/>
        </authorList>
    </citation>
    <scope>TISSUE SPECIFICITY</scope>
    <scope>NUCLEAR LOCALIZATION SIGNAL</scope>
</reference>
<reference key="6">
    <citation type="journal article" date="2012" name="Hum. Mol. Genet.">
        <title>The imprinted NPAP1/C15orf2 gene in the Prader-Willi syndrome region encodes a nuclear pore complex associated protein.</title>
        <authorList>
            <person name="Neumann L.C."/>
            <person name="Markaki Y."/>
            <person name="Mladenov E."/>
            <person name="Hoffmann D."/>
            <person name="Buiting K."/>
            <person name="Horsthemke B."/>
        </authorList>
    </citation>
    <scope>SUBUNIT</scope>
    <scope>SUBCELLULAR LOCATION</scope>
</reference>
<accession>Q9NZP6</accession>
<protein>
    <recommendedName>
        <fullName>Nuclear pore-associated protein 1</fullName>
    </recommendedName>
</protein>